<proteinExistence type="inferred from homology"/>
<organism>
    <name type="scientific">Bacillus licheniformis (strain ATCC 14580 / DSM 13 / JCM 2505 / CCUG 7422 / NBRC 12200 / NCIMB 9375 / NCTC 10341 / NRRL NRS-1264 / Gibson 46)</name>
    <dbReference type="NCBI Taxonomy" id="279010"/>
    <lineage>
        <taxon>Bacteria</taxon>
        <taxon>Bacillati</taxon>
        <taxon>Bacillota</taxon>
        <taxon>Bacilli</taxon>
        <taxon>Bacillales</taxon>
        <taxon>Bacillaceae</taxon>
        <taxon>Bacillus</taxon>
    </lineage>
</organism>
<comment type="function">
    <text evidence="1">Associates with the EF-Tu.GDP complex and induces the exchange of GDP to GTP. It remains bound to the aminoacyl-tRNA.EF-Tu.GTP complex up to the GTP hydrolysis stage on the ribosome.</text>
</comment>
<comment type="subcellular location">
    <subcellularLocation>
        <location evidence="1">Cytoplasm</location>
    </subcellularLocation>
</comment>
<comment type="similarity">
    <text evidence="1">Belongs to the EF-Ts family.</text>
</comment>
<sequence>MAITAQMVKELREKTGAGMMDCKKALTETDGNMDKAIDLLREKGIAKAAKKADRIAAEGLTLIKTDGNTGVILEVNSETDFVAKNEGFKELLNDLADHILAEKPESVEAAMGQKMANGSTVEEYITSAVAKIGEKITLRRFAVLTKGDDAAFGAYLHMGGKIGVLTVLNGTTDEETARDIAMHVAAVNPRFISRDQVSEEEANREREILTQQALQEGKPENIVAKMVEGRLNKYFEEICLLDQAFVKNPDEKVKQVVAAKNATVETFVRYEVGEGIEKRQENFAEEVMNQVKK</sequence>
<accession>Q65JJ8</accession>
<accession>Q62V03</accession>
<keyword id="KW-0963">Cytoplasm</keyword>
<keyword id="KW-0251">Elongation factor</keyword>
<keyword id="KW-0648">Protein biosynthesis</keyword>
<keyword id="KW-1185">Reference proteome</keyword>
<name>EFTS_BACLD</name>
<reference key="1">
    <citation type="journal article" date="2004" name="J. Mol. Microbiol. Biotechnol.">
        <title>The complete genome sequence of Bacillus licheniformis DSM13, an organism with great industrial potential.</title>
        <authorList>
            <person name="Veith B."/>
            <person name="Herzberg C."/>
            <person name="Steckel S."/>
            <person name="Feesche J."/>
            <person name="Maurer K.H."/>
            <person name="Ehrenreich P."/>
            <person name="Baeumer S."/>
            <person name="Henne A."/>
            <person name="Liesegang H."/>
            <person name="Merkl R."/>
            <person name="Ehrenreich A."/>
            <person name="Gottschalk G."/>
        </authorList>
    </citation>
    <scope>NUCLEOTIDE SEQUENCE [LARGE SCALE GENOMIC DNA]</scope>
    <source>
        <strain>ATCC 14580 / DSM 13 / JCM 2505 / CCUG 7422 / NBRC 12200 / NCIMB 9375 / NCTC 10341 / NRRL NRS-1264 / Gibson 46</strain>
    </source>
</reference>
<reference key="2">
    <citation type="journal article" date="2004" name="Genome Biol.">
        <title>Complete genome sequence of the industrial bacterium Bacillus licheniformis and comparisons with closely related Bacillus species.</title>
        <authorList>
            <person name="Rey M.W."/>
            <person name="Ramaiya P."/>
            <person name="Nelson B.A."/>
            <person name="Brody-Karpin S.D."/>
            <person name="Zaretsky E.J."/>
            <person name="Tang M."/>
            <person name="Lopez de Leon A."/>
            <person name="Xiang H."/>
            <person name="Gusti V."/>
            <person name="Clausen I.G."/>
            <person name="Olsen P.B."/>
            <person name="Rasmussen M.D."/>
            <person name="Andersen J.T."/>
            <person name="Joergensen P.L."/>
            <person name="Larsen T.S."/>
            <person name="Sorokin A."/>
            <person name="Bolotin A."/>
            <person name="Lapidus A."/>
            <person name="Galleron N."/>
            <person name="Ehrlich S.D."/>
            <person name="Berka R.M."/>
        </authorList>
    </citation>
    <scope>NUCLEOTIDE SEQUENCE [LARGE SCALE GENOMIC DNA]</scope>
    <source>
        <strain>ATCC 14580 / DSM 13 / JCM 2505 / CCUG 7422 / NBRC 12200 / NCIMB 9375 / NCTC 10341 / NRRL NRS-1264 / Gibson 46</strain>
    </source>
</reference>
<protein>
    <recommendedName>
        <fullName evidence="1">Elongation factor Ts</fullName>
        <shortName evidence="1">EF-Ts</shortName>
    </recommendedName>
</protein>
<evidence type="ECO:0000255" key="1">
    <source>
        <dbReference type="HAMAP-Rule" id="MF_00050"/>
    </source>
</evidence>
<feature type="chain" id="PRO_0000161075" description="Elongation factor Ts">
    <location>
        <begin position="1"/>
        <end position="293"/>
    </location>
</feature>
<feature type="region of interest" description="Involved in Mg(2+) ion dislocation from EF-Tu" evidence="1">
    <location>
        <begin position="79"/>
        <end position="82"/>
    </location>
</feature>
<gene>
    <name evidence="1" type="primary">tsf</name>
    <name type="ordered locus">BLi01871</name>
    <name type="ordered locus">BL01243</name>
</gene>
<dbReference type="EMBL" id="AE017333">
    <property type="protein sequence ID" value="AAU40766.1"/>
    <property type="molecule type" value="Genomic_DNA"/>
</dbReference>
<dbReference type="EMBL" id="CP000002">
    <property type="protein sequence ID" value="AAU23406.2"/>
    <property type="molecule type" value="Genomic_DNA"/>
</dbReference>
<dbReference type="RefSeq" id="WP_003181832.1">
    <property type="nucleotide sequence ID" value="NC_006322.1"/>
</dbReference>
<dbReference type="SMR" id="Q65JJ8"/>
<dbReference type="STRING" id="279010.BL01243"/>
<dbReference type="GeneID" id="92861536"/>
<dbReference type="KEGG" id="bld:BLi01871"/>
<dbReference type="KEGG" id="bli:BL01243"/>
<dbReference type="eggNOG" id="COG0264">
    <property type="taxonomic scope" value="Bacteria"/>
</dbReference>
<dbReference type="HOGENOM" id="CLU_047155_0_2_9"/>
<dbReference type="Proteomes" id="UP000000606">
    <property type="component" value="Chromosome"/>
</dbReference>
<dbReference type="GO" id="GO:0005737">
    <property type="term" value="C:cytoplasm"/>
    <property type="evidence" value="ECO:0007669"/>
    <property type="project" value="UniProtKB-SubCell"/>
</dbReference>
<dbReference type="GO" id="GO:0003746">
    <property type="term" value="F:translation elongation factor activity"/>
    <property type="evidence" value="ECO:0007669"/>
    <property type="project" value="UniProtKB-UniRule"/>
</dbReference>
<dbReference type="CDD" id="cd14275">
    <property type="entry name" value="UBA_EF-Ts"/>
    <property type="match status" value="1"/>
</dbReference>
<dbReference type="FunFam" id="1.10.286.20:FF:000003">
    <property type="entry name" value="Elongation factor Ts"/>
    <property type="match status" value="1"/>
</dbReference>
<dbReference type="FunFam" id="1.10.8.10:FF:000001">
    <property type="entry name" value="Elongation factor Ts"/>
    <property type="match status" value="1"/>
</dbReference>
<dbReference type="Gene3D" id="1.10.286.20">
    <property type="match status" value="1"/>
</dbReference>
<dbReference type="Gene3D" id="1.10.8.10">
    <property type="entry name" value="DNA helicase RuvA subunit, C-terminal domain"/>
    <property type="match status" value="1"/>
</dbReference>
<dbReference type="Gene3D" id="3.30.479.20">
    <property type="entry name" value="Elongation factor Ts, dimerisation domain"/>
    <property type="match status" value="2"/>
</dbReference>
<dbReference type="HAMAP" id="MF_00050">
    <property type="entry name" value="EF_Ts"/>
    <property type="match status" value="1"/>
</dbReference>
<dbReference type="InterPro" id="IPR036402">
    <property type="entry name" value="EF-Ts_dimer_sf"/>
</dbReference>
<dbReference type="InterPro" id="IPR001816">
    <property type="entry name" value="Transl_elong_EFTs/EF1B"/>
</dbReference>
<dbReference type="InterPro" id="IPR014039">
    <property type="entry name" value="Transl_elong_EFTs/EF1B_dimer"/>
</dbReference>
<dbReference type="InterPro" id="IPR018101">
    <property type="entry name" value="Transl_elong_Ts_CS"/>
</dbReference>
<dbReference type="InterPro" id="IPR009060">
    <property type="entry name" value="UBA-like_sf"/>
</dbReference>
<dbReference type="NCBIfam" id="TIGR00116">
    <property type="entry name" value="tsf"/>
    <property type="match status" value="1"/>
</dbReference>
<dbReference type="PANTHER" id="PTHR11741">
    <property type="entry name" value="ELONGATION FACTOR TS"/>
    <property type="match status" value="1"/>
</dbReference>
<dbReference type="PANTHER" id="PTHR11741:SF0">
    <property type="entry name" value="ELONGATION FACTOR TS, MITOCHONDRIAL"/>
    <property type="match status" value="1"/>
</dbReference>
<dbReference type="Pfam" id="PF00889">
    <property type="entry name" value="EF_TS"/>
    <property type="match status" value="1"/>
</dbReference>
<dbReference type="SUPFAM" id="SSF54713">
    <property type="entry name" value="Elongation factor Ts (EF-Ts), dimerisation domain"/>
    <property type="match status" value="2"/>
</dbReference>
<dbReference type="SUPFAM" id="SSF46934">
    <property type="entry name" value="UBA-like"/>
    <property type="match status" value="1"/>
</dbReference>
<dbReference type="PROSITE" id="PS01126">
    <property type="entry name" value="EF_TS_1"/>
    <property type="match status" value="1"/>
</dbReference>
<dbReference type="PROSITE" id="PS01127">
    <property type="entry name" value="EF_TS_2"/>
    <property type="match status" value="1"/>
</dbReference>